<name>SYP_VIBCM</name>
<evidence type="ECO:0000255" key="1">
    <source>
        <dbReference type="HAMAP-Rule" id="MF_01569"/>
    </source>
</evidence>
<protein>
    <recommendedName>
        <fullName evidence="1">Proline--tRNA ligase</fullName>
        <ecNumber evidence="1">6.1.1.15</ecNumber>
    </recommendedName>
    <alternativeName>
        <fullName evidence="1">Prolyl-tRNA synthetase</fullName>
        <shortName evidence="1">ProRS</shortName>
    </alternativeName>
</protein>
<sequence length="571" mass="63251">MRTSNYLLSTLKETPNDAEVVSHKLMLRAGMIRKLASGLYTWLPTGLRVLRKVENIVRQEIDNAGAIETLMPVVQPFELWEETGRSEKMGPELLRFTDRHERPFVLSPTAEEVITALVRNEVSSYKQLPLNLYQIQTKFRDERRPRFGVMRAREFCMMDAYSFDIDKAGLEKSYEAMHVAYCKAFDRMGLDYRPVLADTGAIGGNGSHEFHVLAESGEDLIAFSTESDYAANIEKAEAVAPAIERPAPTQAMTLVDTPNAKTIAELVEQHGLPIEKTVKTLFVKASDEIDAPIVALIIRGDHELNEIKAEKLAEVASPLEMASEEEIRALIGAGPGSLGPVGLKLPFIVDRTVAVMNDFGAGANIDGKHYFGINWGRDVELGKVEDLRNVVEGDPSPCGKGTLMLKRGIEVGHIFQLGTNYSEKMNCGVLDSNGKNVILEMGCYGIGVSRVVAAAIEQNHDDYGIIWPDAIAPFQVAIVPMNMHKSERVQQAAEKLYAELTAAGIEVLFDDRKERPGVMFSDMELIGVPHTIIIGDRSMDEGHFEYKNRRQGEKEAVAMESIIDFIQAKLA</sequence>
<feature type="chain" id="PRO_1000185521" description="Proline--tRNA ligase">
    <location>
        <begin position="1"/>
        <end position="571"/>
    </location>
</feature>
<reference key="1">
    <citation type="journal article" date="2008" name="PLoS ONE">
        <title>A recalibrated molecular clock and independent origins for the cholera pandemic clones.</title>
        <authorList>
            <person name="Feng L."/>
            <person name="Reeves P.R."/>
            <person name="Lan R."/>
            <person name="Ren Y."/>
            <person name="Gao C."/>
            <person name="Zhou Z."/>
            <person name="Ren Y."/>
            <person name="Cheng J."/>
            <person name="Wang W."/>
            <person name="Wang J."/>
            <person name="Qian W."/>
            <person name="Li D."/>
            <person name="Wang L."/>
        </authorList>
    </citation>
    <scope>NUCLEOTIDE SEQUENCE [LARGE SCALE GENOMIC DNA]</scope>
    <source>
        <strain>M66-2</strain>
    </source>
</reference>
<gene>
    <name evidence="1" type="primary">proS</name>
    <name type="ordered locus">VCM66_0832</name>
</gene>
<comment type="function">
    <text evidence="1">Catalyzes the attachment of proline to tRNA(Pro) in a two-step reaction: proline is first activated by ATP to form Pro-AMP and then transferred to the acceptor end of tRNA(Pro). As ProRS can inadvertently accommodate and process non-cognate amino acids such as alanine and cysteine, to avoid such errors it has two additional distinct editing activities against alanine. One activity is designated as 'pretransfer' editing and involves the tRNA(Pro)-independent hydrolysis of activated Ala-AMP. The other activity is designated 'posttransfer' editing and involves deacylation of mischarged Ala-tRNA(Pro). The misacylated Cys-tRNA(Pro) is not edited by ProRS.</text>
</comment>
<comment type="catalytic activity">
    <reaction evidence="1">
        <text>tRNA(Pro) + L-proline + ATP = L-prolyl-tRNA(Pro) + AMP + diphosphate</text>
        <dbReference type="Rhea" id="RHEA:14305"/>
        <dbReference type="Rhea" id="RHEA-COMP:9700"/>
        <dbReference type="Rhea" id="RHEA-COMP:9702"/>
        <dbReference type="ChEBI" id="CHEBI:30616"/>
        <dbReference type="ChEBI" id="CHEBI:33019"/>
        <dbReference type="ChEBI" id="CHEBI:60039"/>
        <dbReference type="ChEBI" id="CHEBI:78442"/>
        <dbReference type="ChEBI" id="CHEBI:78532"/>
        <dbReference type="ChEBI" id="CHEBI:456215"/>
        <dbReference type="EC" id="6.1.1.15"/>
    </reaction>
</comment>
<comment type="subunit">
    <text evidence="1">Homodimer.</text>
</comment>
<comment type="subcellular location">
    <subcellularLocation>
        <location evidence="1">Cytoplasm</location>
    </subcellularLocation>
</comment>
<comment type="domain">
    <text evidence="1">Consists of three domains: the N-terminal catalytic domain, the editing domain and the C-terminal anticodon-binding domain.</text>
</comment>
<comment type="similarity">
    <text evidence="1">Belongs to the class-II aminoacyl-tRNA synthetase family. ProS type 1 subfamily.</text>
</comment>
<keyword id="KW-0030">Aminoacyl-tRNA synthetase</keyword>
<keyword id="KW-0067">ATP-binding</keyword>
<keyword id="KW-0963">Cytoplasm</keyword>
<keyword id="KW-0436">Ligase</keyword>
<keyword id="KW-0547">Nucleotide-binding</keyword>
<keyword id="KW-0648">Protein biosynthesis</keyword>
<organism>
    <name type="scientific">Vibrio cholerae serotype O1 (strain M66-2)</name>
    <dbReference type="NCBI Taxonomy" id="579112"/>
    <lineage>
        <taxon>Bacteria</taxon>
        <taxon>Pseudomonadati</taxon>
        <taxon>Pseudomonadota</taxon>
        <taxon>Gammaproteobacteria</taxon>
        <taxon>Vibrionales</taxon>
        <taxon>Vibrionaceae</taxon>
        <taxon>Vibrio</taxon>
    </lineage>
</organism>
<accession>C3LTC5</accession>
<dbReference type="EC" id="6.1.1.15" evidence="1"/>
<dbReference type="EMBL" id="CP001233">
    <property type="protein sequence ID" value="ACP05151.1"/>
    <property type="molecule type" value="Genomic_DNA"/>
</dbReference>
<dbReference type="RefSeq" id="WP_001260664.1">
    <property type="nucleotide sequence ID" value="NC_012578.1"/>
</dbReference>
<dbReference type="SMR" id="C3LTC5"/>
<dbReference type="KEGG" id="vcm:VCM66_0832"/>
<dbReference type="HOGENOM" id="CLU_016739_0_0_6"/>
<dbReference type="Proteomes" id="UP000001217">
    <property type="component" value="Chromosome I"/>
</dbReference>
<dbReference type="GO" id="GO:0005829">
    <property type="term" value="C:cytosol"/>
    <property type="evidence" value="ECO:0007669"/>
    <property type="project" value="TreeGrafter"/>
</dbReference>
<dbReference type="GO" id="GO:0002161">
    <property type="term" value="F:aminoacyl-tRNA deacylase activity"/>
    <property type="evidence" value="ECO:0007669"/>
    <property type="project" value="InterPro"/>
</dbReference>
<dbReference type="GO" id="GO:0005524">
    <property type="term" value="F:ATP binding"/>
    <property type="evidence" value="ECO:0007669"/>
    <property type="project" value="UniProtKB-UniRule"/>
</dbReference>
<dbReference type="GO" id="GO:0004827">
    <property type="term" value="F:proline-tRNA ligase activity"/>
    <property type="evidence" value="ECO:0007669"/>
    <property type="project" value="UniProtKB-UniRule"/>
</dbReference>
<dbReference type="GO" id="GO:0006433">
    <property type="term" value="P:prolyl-tRNA aminoacylation"/>
    <property type="evidence" value="ECO:0007669"/>
    <property type="project" value="UniProtKB-UniRule"/>
</dbReference>
<dbReference type="CDD" id="cd04334">
    <property type="entry name" value="ProRS-INS"/>
    <property type="match status" value="1"/>
</dbReference>
<dbReference type="CDD" id="cd00861">
    <property type="entry name" value="ProRS_anticodon_short"/>
    <property type="match status" value="1"/>
</dbReference>
<dbReference type="CDD" id="cd00779">
    <property type="entry name" value="ProRS_core_prok"/>
    <property type="match status" value="1"/>
</dbReference>
<dbReference type="FunFam" id="3.30.930.10:FF:000012">
    <property type="entry name" value="Proline--tRNA ligase"/>
    <property type="match status" value="1"/>
</dbReference>
<dbReference type="FunFam" id="3.30.930.10:FF:000015">
    <property type="entry name" value="Proline--tRNA ligase"/>
    <property type="match status" value="1"/>
</dbReference>
<dbReference type="FunFam" id="3.40.50.800:FF:000006">
    <property type="entry name" value="Proline--tRNA ligase"/>
    <property type="match status" value="1"/>
</dbReference>
<dbReference type="FunFam" id="3.90.960.10:FF:000001">
    <property type="entry name" value="Proline--tRNA ligase"/>
    <property type="match status" value="1"/>
</dbReference>
<dbReference type="Gene3D" id="3.40.50.800">
    <property type="entry name" value="Anticodon-binding domain"/>
    <property type="match status" value="1"/>
</dbReference>
<dbReference type="Gene3D" id="3.30.930.10">
    <property type="entry name" value="Bira Bifunctional Protein, Domain 2"/>
    <property type="match status" value="2"/>
</dbReference>
<dbReference type="Gene3D" id="3.90.960.10">
    <property type="entry name" value="YbaK/aminoacyl-tRNA synthetase-associated domain"/>
    <property type="match status" value="1"/>
</dbReference>
<dbReference type="HAMAP" id="MF_01569">
    <property type="entry name" value="Pro_tRNA_synth_type1"/>
    <property type="match status" value="1"/>
</dbReference>
<dbReference type="InterPro" id="IPR002314">
    <property type="entry name" value="aa-tRNA-synt_IIb"/>
</dbReference>
<dbReference type="InterPro" id="IPR006195">
    <property type="entry name" value="aa-tRNA-synth_II"/>
</dbReference>
<dbReference type="InterPro" id="IPR045864">
    <property type="entry name" value="aa-tRNA-synth_II/BPL/LPL"/>
</dbReference>
<dbReference type="InterPro" id="IPR004154">
    <property type="entry name" value="Anticodon-bd"/>
</dbReference>
<dbReference type="InterPro" id="IPR036621">
    <property type="entry name" value="Anticodon-bd_dom_sf"/>
</dbReference>
<dbReference type="InterPro" id="IPR002316">
    <property type="entry name" value="Pro-tRNA-ligase_IIa"/>
</dbReference>
<dbReference type="InterPro" id="IPR004500">
    <property type="entry name" value="Pro-tRNA-synth_IIa_bac-type"/>
</dbReference>
<dbReference type="InterPro" id="IPR023717">
    <property type="entry name" value="Pro-tRNA-Synthase_IIa_type1"/>
</dbReference>
<dbReference type="InterPro" id="IPR050062">
    <property type="entry name" value="Pro-tRNA_synthetase"/>
</dbReference>
<dbReference type="InterPro" id="IPR044140">
    <property type="entry name" value="ProRS_anticodon_short"/>
</dbReference>
<dbReference type="InterPro" id="IPR033730">
    <property type="entry name" value="ProRS_core_prok"/>
</dbReference>
<dbReference type="InterPro" id="IPR036754">
    <property type="entry name" value="YbaK/aa-tRNA-synt-asso_dom_sf"/>
</dbReference>
<dbReference type="InterPro" id="IPR007214">
    <property type="entry name" value="YbaK/aa-tRNA-synth-assoc-dom"/>
</dbReference>
<dbReference type="NCBIfam" id="NF006625">
    <property type="entry name" value="PRK09194.1"/>
    <property type="match status" value="1"/>
</dbReference>
<dbReference type="NCBIfam" id="TIGR00409">
    <property type="entry name" value="proS_fam_II"/>
    <property type="match status" value="1"/>
</dbReference>
<dbReference type="PANTHER" id="PTHR42753">
    <property type="entry name" value="MITOCHONDRIAL RIBOSOME PROTEIN L39/PROLYL-TRNA LIGASE FAMILY MEMBER"/>
    <property type="match status" value="1"/>
</dbReference>
<dbReference type="PANTHER" id="PTHR42753:SF2">
    <property type="entry name" value="PROLINE--TRNA LIGASE"/>
    <property type="match status" value="1"/>
</dbReference>
<dbReference type="Pfam" id="PF03129">
    <property type="entry name" value="HGTP_anticodon"/>
    <property type="match status" value="1"/>
</dbReference>
<dbReference type="Pfam" id="PF00587">
    <property type="entry name" value="tRNA-synt_2b"/>
    <property type="match status" value="1"/>
</dbReference>
<dbReference type="Pfam" id="PF04073">
    <property type="entry name" value="tRNA_edit"/>
    <property type="match status" value="1"/>
</dbReference>
<dbReference type="PIRSF" id="PIRSF001535">
    <property type="entry name" value="ProRS_1"/>
    <property type="match status" value="1"/>
</dbReference>
<dbReference type="PRINTS" id="PR01046">
    <property type="entry name" value="TRNASYNTHPRO"/>
</dbReference>
<dbReference type="SUPFAM" id="SSF52954">
    <property type="entry name" value="Class II aaRS ABD-related"/>
    <property type="match status" value="1"/>
</dbReference>
<dbReference type="SUPFAM" id="SSF55681">
    <property type="entry name" value="Class II aaRS and biotin synthetases"/>
    <property type="match status" value="1"/>
</dbReference>
<dbReference type="SUPFAM" id="SSF55826">
    <property type="entry name" value="YbaK/ProRS associated domain"/>
    <property type="match status" value="1"/>
</dbReference>
<dbReference type="PROSITE" id="PS50862">
    <property type="entry name" value="AA_TRNA_LIGASE_II"/>
    <property type="match status" value="1"/>
</dbReference>
<proteinExistence type="inferred from homology"/>